<protein>
    <recommendedName>
        <fullName evidence="1">Phosphoenolpyruvate carboxykinase (ATP)</fullName>
        <shortName evidence="1">PCK</shortName>
        <shortName evidence="1">PEP carboxykinase</shortName>
        <shortName evidence="1">PEPCK</shortName>
        <ecNumber evidence="1">4.1.1.49</ecNumber>
    </recommendedName>
</protein>
<name>PCKA_CAMLR</name>
<reference key="1">
    <citation type="journal article" date="2008" name="Foodborne Pathog. Dis.">
        <title>The complete genome sequence and analysis of the human pathogen Campylobacter lari.</title>
        <authorList>
            <person name="Miller W.G."/>
            <person name="Wang G."/>
            <person name="Binnewies T.T."/>
            <person name="Parker C.T."/>
        </authorList>
    </citation>
    <scope>NUCLEOTIDE SEQUENCE [LARGE SCALE GENOMIC DNA]</scope>
    <source>
        <strain>RM2100 / D67 / ATCC BAA-1060</strain>
    </source>
</reference>
<accession>B9KD79</accession>
<comment type="function">
    <text evidence="1">Involved in the gluconeogenesis. Catalyzes the conversion of oxaloacetate (OAA) to phosphoenolpyruvate (PEP) through direct phosphoryl transfer between the nucleoside triphosphate and OAA.</text>
</comment>
<comment type="catalytic activity">
    <reaction evidence="1">
        <text>oxaloacetate + ATP = phosphoenolpyruvate + ADP + CO2</text>
        <dbReference type="Rhea" id="RHEA:18617"/>
        <dbReference type="ChEBI" id="CHEBI:16452"/>
        <dbReference type="ChEBI" id="CHEBI:16526"/>
        <dbReference type="ChEBI" id="CHEBI:30616"/>
        <dbReference type="ChEBI" id="CHEBI:58702"/>
        <dbReference type="ChEBI" id="CHEBI:456216"/>
        <dbReference type="EC" id="4.1.1.49"/>
    </reaction>
</comment>
<comment type="cofactor">
    <cofactor evidence="1">
        <name>Mn(2+)</name>
        <dbReference type="ChEBI" id="CHEBI:29035"/>
    </cofactor>
    <text evidence="1">Binds 1 Mn(2+) ion per subunit.</text>
</comment>
<comment type="pathway">
    <text evidence="1">Carbohydrate biosynthesis; gluconeogenesis.</text>
</comment>
<comment type="subcellular location">
    <subcellularLocation>
        <location evidence="1">Cytoplasm</location>
    </subcellularLocation>
</comment>
<comment type="similarity">
    <text evidence="1">Belongs to the phosphoenolpyruvate carboxykinase (ATP) family.</text>
</comment>
<gene>
    <name evidence="1" type="primary">pckA</name>
    <name type="ordered locus">Cla_1196</name>
</gene>
<evidence type="ECO:0000255" key="1">
    <source>
        <dbReference type="HAMAP-Rule" id="MF_00453"/>
    </source>
</evidence>
<dbReference type="EC" id="4.1.1.49" evidence="1"/>
<dbReference type="EMBL" id="CP000932">
    <property type="protein sequence ID" value="ACM64518.1"/>
    <property type="molecule type" value="Genomic_DNA"/>
</dbReference>
<dbReference type="RefSeq" id="WP_012661901.1">
    <property type="nucleotide sequence ID" value="NC_012039.1"/>
</dbReference>
<dbReference type="SMR" id="B9KD79"/>
<dbReference type="STRING" id="306263.Cla_1196"/>
<dbReference type="KEGG" id="cla:CLA_1196"/>
<dbReference type="PATRIC" id="fig|306263.5.peg.1185"/>
<dbReference type="eggNOG" id="COG1866">
    <property type="taxonomic scope" value="Bacteria"/>
</dbReference>
<dbReference type="HOGENOM" id="CLU_018247_0_1_7"/>
<dbReference type="UniPathway" id="UPA00138"/>
<dbReference type="Proteomes" id="UP000007727">
    <property type="component" value="Chromosome"/>
</dbReference>
<dbReference type="GO" id="GO:0005829">
    <property type="term" value="C:cytosol"/>
    <property type="evidence" value="ECO:0007669"/>
    <property type="project" value="TreeGrafter"/>
</dbReference>
<dbReference type="GO" id="GO:0005524">
    <property type="term" value="F:ATP binding"/>
    <property type="evidence" value="ECO:0007669"/>
    <property type="project" value="UniProtKB-UniRule"/>
</dbReference>
<dbReference type="GO" id="GO:0046872">
    <property type="term" value="F:metal ion binding"/>
    <property type="evidence" value="ECO:0007669"/>
    <property type="project" value="UniProtKB-KW"/>
</dbReference>
<dbReference type="GO" id="GO:0004612">
    <property type="term" value="F:phosphoenolpyruvate carboxykinase (ATP) activity"/>
    <property type="evidence" value="ECO:0007669"/>
    <property type="project" value="UniProtKB-UniRule"/>
</dbReference>
<dbReference type="GO" id="GO:0006094">
    <property type="term" value="P:gluconeogenesis"/>
    <property type="evidence" value="ECO:0007669"/>
    <property type="project" value="UniProtKB-UniRule"/>
</dbReference>
<dbReference type="CDD" id="cd00484">
    <property type="entry name" value="PEPCK_ATP"/>
    <property type="match status" value="1"/>
</dbReference>
<dbReference type="FunFam" id="3.40.449.10:FF:000001">
    <property type="entry name" value="Phosphoenolpyruvate carboxykinase (ATP)"/>
    <property type="match status" value="1"/>
</dbReference>
<dbReference type="Gene3D" id="3.90.228.20">
    <property type="match status" value="1"/>
</dbReference>
<dbReference type="Gene3D" id="3.40.449.10">
    <property type="entry name" value="Phosphoenolpyruvate Carboxykinase, domain 1"/>
    <property type="match status" value="1"/>
</dbReference>
<dbReference type="Gene3D" id="2.170.8.10">
    <property type="entry name" value="Phosphoenolpyruvate Carboxykinase, domain 2"/>
    <property type="match status" value="1"/>
</dbReference>
<dbReference type="HAMAP" id="MF_00453">
    <property type="entry name" value="PEPCK_ATP"/>
    <property type="match status" value="1"/>
</dbReference>
<dbReference type="InterPro" id="IPR001272">
    <property type="entry name" value="PEP_carboxykinase_ATP"/>
</dbReference>
<dbReference type="InterPro" id="IPR013035">
    <property type="entry name" value="PEP_carboxykinase_C"/>
</dbReference>
<dbReference type="InterPro" id="IPR008210">
    <property type="entry name" value="PEP_carboxykinase_N"/>
</dbReference>
<dbReference type="InterPro" id="IPR015994">
    <property type="entry name" value="PEPCK_ATP_CS"/>
</dbReference>
<dbReference type="NCBIfam" id="TIGR00224">
    <property type="entry name" value="pckA"/>
    <property type="match status" value="1"/>
</dbReference>
<dbReference type="NCBIfam" id="NF006819">
    <property type="entry name" value="PRK09344.1-1"/>
    <property type="match status" value="1"/>
</dbReference>
<dbReference type="NCBIfam" id="NF006820">
    <property type="entry name" value="PRK09344.1-2"/>
    <property type="match status" value="1"/>
</dbReference>
<dbReference type="NCBIfam" id="NF006821">
    <property type="entry name" value="PRK09344.1-3"/>
    <property type="match status" value="1"/>
</dbReference>
<dbReference type="PANTHER" id="PTHR30031:SF0">
    <property type="entry name" value="PHOSPHOENOLPYRUVATE CARBOXYKINASE (ATP)"/>
    <property type="match status" value="1"/>
</dbReference>
<dbReference type="PANTHER" id="PTHR30031">
    <property type="entry name" value="PHOSPHOENOLPYRUVATE CARBOXYKINASE ATP"/>
    <property type="match status" value="1"/>
</dbReference>
<dbReference type="Pfam" id="PF01293">
    <property type="entry name" value="PEPCK_ATP"/>
    <property type="match status" value="1"/>
</dbReference>
<dbReference type="PIRSF" id="PIRSF006294">
    <property type="entry name" value="PEP_crbxkin"/>
    <property type="match status" value="1"/>
</dbReference>
<dbReference type="SUPFAM" id="SSF68923">
    <property type="entry name" value="PEP carboxykinase N-terminal domain"/>
    <property type="match status" value="1"/>
</dbReference>
<dbReference type="SUPFAM" id="SSF53795">
    <property type="entry name" value="PEP carboxykinase-like"/>
    <property type="match status" value="1"/>
</dbReference>
<dbReference type="PROSITE" id="PS00532">
    <property type="entry name" value="PEPCK_ATP"/>
    <property type="match status" value="1"/>
</dbReference>
<proteinExistence type="inferred from homology"/>
<organism>
    <name type="scientific">Campylobacter lari (strain RM2100 / D67 / ATCC BAA-1060)</name>
    <dbReference type="NCBI Taxonomy" id="306263"/>
    <lineage>
        <taxon>Bacteria</taxon>
        <taxon>Pseudomonadati</taxon>
        <taxon>Campylobacterota</taxon>
        <taxon>Epsilonproteobacteria</taxon>
        <taxon>Campylobacterales</taxon>
        <taxon>Campylobacteraceae</taxon>
        <taxon>Campylobacter</taxon>
    </lineage>
</organism>
<keyword id="KW-0067">ATP-binding</keyword>
<keyword id="KW-0963">Cytoplasm</keyword>
<keyword id="KW-0210">Decarboxylase</keyword>
<keyword id="KW-0312">Gluconeogenesis</keyword>
<keyword id="KW-0456">Lyase</keyword>
<keyword id="KW-0464">Manganese</keyword>
<keyword id="KW-0479">Metal-binding</keyword>
<keyword id="KW-0547">Nucleotide-binding</keyword>
<keyword id="KW-1185">Reference proteome</keyword>
<sequence length="524" mass="58493">MKGLENLGLENIGQVFHNLSYDELLKHEKNNNEGVCTKNGTFSVDTGIFTGRSPKDKYFVKQDPSQKYIAWGKINQAISEELFEKLLVKAKKQLSNSDIYIQDAYCGASLKSRKAVRFVTQIAWQAHFVKNMFIRPKEEELSGFKPDFVVYNACKCVNEDYEKDGLNSEVFVIFNIEKNIAVIGGTWYGGEMKKGIFSMMNYWLPLENKLPMHCSANVGEKGDVALFFGLSGTGKTTLSTDPKRRLIGDDEHGWDDEGVFNFEGGCYAKCINLDPQSEPEIYGAIKQNALLENVVLKDDLSVDFNNGSKTENTRVSYPIEHILNHEPSLSAGHPSNIIFLSADAFGVLPPVSKLSKEQAMYYFLSGYTAKVAGTERGITEPVATFSACFGEVFLPLHPTVYAKLLGEKISKHNVNVYLVNTGWSGGAYGVGKRMSIKATRACINAILDGSIQNCEFENYDLFNLAVPKELAGVESKLLNPINTWEDKKAYEETKLKLAKMFIENFKRYEDVKEGAEFKLAGPAI</sequence>
<feature type="chain" id="PRO_1000192312" description="Phosphoenolpyruvate carboxykinase (ATP)">
    <location>
        <begin position="1"/>
        <end position="524"/>
    </location>
</feature>
<feature type="binding site" evidence="1">
    <location>
        <position position="52"/>
    </location>
    <ligand>
        <name>substrate</name>
    </ligand>
</feature>
<feature type="binding site" evidence="1">
    <location>
        <position position="188"/>
    </location>
    <ligand>
        <name>substrate</name>
    </ligand>
</feature>
<feature type="binding site" evidence="1">
    <location>
        <position position="194"/>
    </location>
    <ligand>
        <name>ATP</name>
        <dbReference type="ChEBI" id="CHEBI:30616"/>
    </ligand>
</feature>
<feature type="binding site" evidence="1">
    <location>
        <position position="194"/>
    </location>
    <ligand>
        <name>Mn(2+)</name>
        <dbReference type="ChEBI" id="CHEBI:29035"/>
    </ligand>
</feature>
<feature type="binding site" evidence="1">
    <location>
        <position position="194"/>
    </location>
    <ligand>
        <name>substrate</name>
    </ligand>
</feature>
<feature type="binding site" evidence="1">
    <location>
        <position position="213"/>
    </location>
    <ligand>
        <name>ATP</name>
        <dbReference type="ChEBI" id="CHEBI:30616"/>
    </ligand>
</feature>
<feature type="binding site" evidence="1">
    <location>
        <position position="213"/>
    </location>
    <ligand>
        <name>Mn(2+)</name>
        <dbReference type="ChEBI" id="CHEBI:29035"/>
    </ligand>
</feature>
<feature type="binding site" evidence="1">
    <location>
        <begin position="229"/>
        <end position="237"/>
    </location>
    <ligand>
        <name>ATP</name>
        <dbReference type="ChEBI" id="CHEBI:30616"/>
    </ligand>
</feature>
<feature type="binding site" evidence="1">
    <location>
        <position position="250"/>
    </location>
    <ligand>
        <name>Mn(2+)</name>
        <dbReference type="ChEBI" id="CHEBI:29035"/>
    </ligand>
</feature>
<feature type="binding site" evidence="1">
    <location>
        <position position="278"/>
    </location>
    <ligand>
        <name>ATP</name>
        <dbReference type="ChEBI" id="CHEBI:30616"/>
    </ligand>
</feature>
<feature type="binding site" evidence="1">
    <location>
        <position position="314"/>
    </location>
    <ligand>
        <name>ATP</name>
        <dbReference type="ChEBI" id="CHEBI:30616"/>
    </ligand>
</feature>
<feature type="binding site" evidence="1">
    <location>
        <position position="314"/>
    </location>
    <ligand>
        <name>substrate</name>
    </ligand>
</feature>
<feature type="binding site" evidence="1">
    <location>
        <position position="439"/>
    </location>
    <ligand>
        <name>ATP</name>
        <dbReference type="ChEBI" id="CHEBI:30616"/>
    </ligand>
</feature>